<proteinExistence type="inferred from homology"/>
<organism>
    <name type="scientific">Mus musculus</name>
    <name type="common">Mouse</name>
    <dbReference type="NCBI Taxonomy" id="10090"/>
    <lineage>
        <taxon>Eukaryota</taxon>
        <taxon>Metazoa</taxon>
        <taxon>Chordata</taxon>
        <taxon>Craniata</taxon>
        <taxon>Vertebrata</taxon>
        <taxon>Euteleostomi</taxon>
        <taxon>Mammalia</taxon>
        <taxon>Eutheria</taxon>
        <taxon>Euarchontoglires</taxon>
        <taxon>Glires</taxon>
        <taxon>Rodentia</taxon>
        <taxon>Myomorpha</taxon>
        <taxon>Muroidea</taxon>
        <taxon>Muridae</taxon>
        <taxon>Murinae</taxon>
        <taxon>Mus</taxon>
        <taxon>Mus</taxon>
    </lineage>
</organism>
<evidence type="ECO:0000255" key="1"/>
<evidence type="ECO:0000305" key="2"/>
<feature type="signal peptide" evidence="1">
    <location>
        <begin position="1"/>
        <end position="20"/>
    </location>
</feature>
<feature type="chain" id="PRO_0000354973" description="Prostate and testis expressed protein 3">
    <location>
        <begin position="21"/>
        <end position="98"/>
    </location>
</feature>
<feature type="domain" description="UPAR/Ly6" evidence="2">
    <location>
        <begin position="21"/>
        <end position="97"/>
    </location>
</feature>
<feature type="disulfide bond" evidence="1">
    <location>
        <begin position="23"/>
        <end position="50"/>
    </location>
</feature>
<feature type="disulfide bond" evidence="1">
    <location>
        <begin position="26"/>
        <end position="35"/>
    </location>
</feature>
<feature type="disulfide bond" evidence="1">
    <location>
        <begin position="42"/>
        <end position="68"/>
    </location>
</feature>
<feature type="disulfide bond" evidence="1">
    <location>
        <begin position="72"/>
        <end position="88"/>
    </location>
</feature>
<gene>
    <name type="primary">Pate3</name>
    <name type="synonym">Gm17365</name>
</gene>
<protein>
    <recommendedName>
        <fullName>Prostate and testis expressed protein 3</fullName>
    </recommendedName>
    <alternativeName>
        <fullName>Epididymis-specific ESC112</fullName>
    </alternativeName>
    <alternativeName>
        <fullName>PATE-like protein DJ</fullName>
        <shortName>PATE-DJ</shortName>
    </alternativeName>
</protein>
<accession>B3GLJ3</accession>
<accession>D8KWR6</accession>
<sequence length="98" mass="11660">MNKHFLLLFSLFYFIVEATSLKCVTCHLRTQSDHCRRGFGVCLAQKHEICMSLRIYFSGSLQLSYMVCQRFCKNLTYIFNNRTYTHKCCNSDFCNFRL</sequence>
<dbReference type="EMBL" id="EU703626">
    <property type="protein sequence ID" value="ACD81925.1"/>
    <property type="molecule type" value="mRNA"/>
</dbReference>
<dbReference type="EMBL" id="EU004071">
    <property type="protein sequence ID" value="ABV64741.1"/>
    <property type="molecule type" value="mRNA"/>
</dbReference>
<dbReference type="CCDS" id="CCDS52755.1"/>
<dbReference type="RefSeq" id="NP_001161064.1">
    <property type="nucleotide sequence ID" value="NM_001167592.3"/>
</dbReference>
<dbReference type="SMR" id="B3GLJ3"/>
<dbReference type="FunCoup" id="B3GLJ3">
    <property type="interactions" value="371"/>
</dbReference>
<dbReference type="STRING" id="10090.ENSMUSP00000136668"/>
<dbReference type="PaxDb" id="10090-ENSMUSP00000136668"/>
<dbReference type="ProteomicsDB" id="294015"/>
<dbReference type="Antibodypedia" id="71916">
    <property type="antibodies" value="61 antibodies from 13 providers"/>
</dbReference>
<dbReference type="Ensembl" id="ENSMUST00000178236.3">
    <property type="protein sequence ID" value="ENSMUSP00000136668.2"/>
    <property type="gene ID" value="ENSMUSG00000094995.3"/>
</dbReference>
<dbReference type="GeneID" id="100312956"/>
<dbReference type="KEGG" id="mmu:100312956"/>
<dbReference type="UCSC" id="uc012gql.1">
    <property type="organism name" value="mouse"/>
</dbReference>
<dbReference type="AGR" id="MGI:4936999"/>
<dbReference type="CTD" id="100169851"/>
<dbReference type="MGI" id="MGI:4936999">
    <property type="gene designation" value="Pate3"/>
</dbReference>
<dbReference type="VEuPathDB" id="HostDB:ENSMUSG00000094995"/>
<dbReference type="eggNOG" id="ENOG502TM14">
    <property type="taxonomic scope" value="Eukaryota"/>
</dbReference>
<dbReference type="GeneTree" id="ENSGT00690000102487"/>
<dbReference type="HOGENOM" id="CLU_178161_0_0_1"/>
<dbReference type="InParanoid" id="B3GLJ3"/>
<dbReference type="OMA" id="YVHKCCN"/>
<dbReference type="OrthoDB" id="9827827at2759"/>
<dbReference type="PhylomeDB" id="B3GLJ3"/>
<dbReference type="BioGRID-ORCS" id="100312956">
    <property type="hits" value="1 hit in 68 CRISPR screens"/>
</dbReference>
<dbReference type="PRO" id="PR:B3GLJ3"/>
<dbReference type="Proteomes" id="UP000000589">
    <property type="component" value="Chromosome 9"/>
</dbReference>
<dbReference type="RNAct" id="B3GLJ3">
    <property type="molecule type" value="protein"/>
</dbReference>
<dbReference type="Bgee" id="ENSMUSG00000094995">
    <property type="expression patterns" value="Expressed in secondary oocyte and 2 other cell types or tissues"/>
</dbReference>
<dbReference type="GO" id="GO:0005576">
    <property type="term" value="C:extracellular region"/>
    <property type="evidence" value="ECO:0007669"/>
    <property type="project" value="UniProtKB-SubCell"/>
</dbReference>
<dbReference type="CDD" id="cd23579">
    <property type="entry name" value="TFP_LU_ECD_PATE3"/>
    <property type="match status" value="1"/>
</dbReference>
<dbReference type="InterPro" id="IPR051110">
    <property type="entry name" value="Ly-6/neurotoxin-like_GPI-ap"/>
</dbReference>
<dbReference type="InterPro" id="IPR016054">
    <property type="entry name" value="LY6_UPA_recep-like"/>
</dbReference>
<dbReference type="InterPro" id="IPR045860">
    <property type="entry name" value="Snake_toxin-like_sf"/>
</dbReference>
<dbReference type="PANTHER" id="PTHR16983:SF31">
    <property type="entry name" value="PROSTATE AND TESTIS EXPRESSED PROTEIN Q-RELATED"/>
    <property type="match status" value="1"/>
</dbReference>
<dbReference type="PANTHER" id="PTHR16983">
    <property type="entry name" value="UPAR/LY6 DOMAIN-CONTAINING PROTEIN"/>
    <property type="match status" value="1"/>
</dbReference>
<dbReference type="Pfam" id="PF00021">
    <property type="entry name" value="UPAR_LY6"/>
    <property type="match status" value="1"/>
</dbReference>
<dbReference type="SUPFAM" id="SSF57302">
    <property type="entry name" value="Snake toxin-like"/>
    <property type="match status" value="1"/>
</dbReference>
<comment type="subcellular location">
    <subcellularLocation>
        <location evidence="2">Secreted</location>
    </subcellularLocation>
</comment>
<comment type="similarity">
    <text evidence="2">Belongs to the PATE family.</text>
</comment>
<name>PATE3_MOUSE</name>
<reference key="1">
    <citation type="journal article" date="2008" name="J. Biol. Chem.">
        <title>PATE gene clusters code for multiple, secreted TFP/Ly-6/uPAR proteins that are expressed in reproductive and neuron-rich tissues and possess neuromodulatory activity.</title>
        <authorList>
            <person name="Levitin F."/>
            <person name="Weiss M."/>
            <person name="Hahn Y."/>
            <person name="Stern O."/>
            <person name="Papke R.L."/>
            <person name="Matusik R."/>
            <person name="Nandana S.R."/>
            <person name="Ziv R."/>
            <person name="Pichinuk E."/>
            <person name="Salame S."/>
            <person name="Bera T."/>
            <person name="Vincent J."/>
            <person name="Lee B."/>
            <person name="Pastan I."/>
            <person name="Wreschner D.H."/>
        </authorList>
    </citation>
    <scope>NUCLEOTIDE SEQUENCE [MRNA]</scope>
    <source>
        <strain>BALB/cJ</strain>
    </source>
</reference>
<reference key="2">
    <citation type="submission" date="2007-06" db="EMBL/GenBank/DDBJ databases">
        <title>Mouse ESC112 with single Ly-6 domain.</title>
        <authorList>
            <person name="Zhan X."/>
            <person name="Liu Q."/>
            <person name="Zhang Y.-L."/>
        </authorList>
    </citation>
    <scope>NUCLEOTIDE SEQUENCE [MRNA]</scope>
    <source>
        <strain>C57BL/6J</strain>
    </source>
</reference>
<keyword id="KW-1015">Disulfide bond</keyword>
<keyword id="KW-1185">Reference proteome</keyword>
<keyword id="KW-0964">Secreted</keyword>
<keyword id="KW-0732">Signal</keyword>